<protein>
    <recommendedName>
        <fullName evidence="1">F420-dependent methylenetetrahydromethanopterin dehydrogenase</fullName>
        <shortName evidence="1">MTD</shortName>
        <ecNumber evidence="1">1.5.98.1</ecNumber>
    </recommendedName>
    <alternativeName>
        <fullName evidence="1">Coenzyme F420-dependent N5,N10-methylenetetrahydromethanopterin dehydrogenase</fullName>
    </alternativeName>
</protein>
<sequence length="280" mass="30248">MVVKVGVAKLGNIAAGVMAELLLDERADREDMMTFMATSGTKLQKEDVDRVVSNLKAWQPDFAIVVSPNGVLEGPVGAREDLKAAGIPTIVITDDVTTKKEGWEALKASGFGYIIVKADAMIGARREFLDPVEMADYNGNLVKVLALTGAFRKLQLELDKVIDQVKAGKKGAELELPKLVLNSDNSTKGEFTNPYALAKARAAYEIAQAVAGVNVKGCFMTKEWTDYVPIVASAHEMMRAAANLCDQARELEKGCDGVIRKPHKKTGEIVSKVALISKPE</sequence>
<accession>A2SPK1</accession>
<organism>
    <name type="scientific">Methanocorpusculum labreanum (strain ATCC 43576 / DSM 4855 / Z)</name>
    <dbReference type="NCBI Taxonomy" id="410358"/>
    <lineage>
        <taxon>Archaea</taxon>
        <taxon>Methanobacteriati</taxon>
        <taxon>Methanobacteriota</taxon>
        <taxon>Stenosarchaea group</taxon>
        <taxon>Methanomicrobia</taxon>
        <taxon>Methanomicrobiales</taxon>
        <taxon>Methanocorpusculaceae</taxon>
        <taxon>Methanocorpusculum</taxon>
    </lineage>
</organism>
<dbReference type="EC" id="1.5.98.1" evidence="1"/>
<dbReference type="EMBL" id="CP000559">
    <property type="protein sequence ID" value="ABN06257.1"/>
    <property type="molecule type" value="Genomic_DNA"/>
</dbReference>
<dbReference type="RefSeq" id="WP_011832458.1">
    <property type="nucleotide sequence ID" value="NC_008942.1"/>
</dbReference>
<dbReference type="SMR" id="A2SPK1"/>
<dbReference type="STRING" id="410358.Mlab_0079"/>
<dbReference type="GeneID" id="4794919"/>
<dbReference type="KEGG" id="mla:Mlab_0079"/>
<dbReference type="eggNOG" id="arCOG04382">
    <property type="taxonomic scope" value="Archaea"/>
</dbReference>
<dbReference type="HOGENOM" id="CLU_1006890_0_0_2"/>
<dbReference type="OrthoDB" id="49844at2157"/>
<dbReference type="UniPathway" id="UPA00640">
    <property type="reaction ID" value="UER00695"/>
</dbReference>
<dbReference type="Proteomes" id="UP000000365">
    <property type="component" value="Chromosome"/>
</dbReference>
<dbReference type="GO" id="GO:0008901">
    <property type="term" value="F:ferredoxin hydrogenase activity"/>
    <property type="evidence" value="ECO:0007669"/>
    <property type="project" value="InterPro"/>
</dbReference>
<dbReference type="GO" id="GO:0030268">
    <property type="term" value="F:methylenetetrahydromethanopterin dehydrogenase activity"/>
    <property type="evidence" value="ECO:0007669"/>
    <property type="project" value="UniProtKB-UniRule"/>
</dbReference>
<dbReference type="GO" id="GO:0019386">
    <property type="term" value="P:methanogenesis, from carbon dioxide"/>
    <property type="evidence" value="ECO:0007669"/>
    <property type="project" value="UniProtKB-UniRule"/>
</dbReference>
<dbReference type="GO" id="GO:0006730">
    <property type="term" value="P:one-carbon metabolic process"/>
    <property type="evidence" value="ECO:0007669"/>
    <property type="project" value="UniProtKB-UniRule"/>
</dbReference>
<dbReference type="Gene3D" id="6.10.140.120">
    <property type="match status" value="1"/>
</dbReference>
<dbReference type="Gene3D" id="3.40.50.10830">
    <property type="entry name" value="F420-dependent methylenetetrahydromethanopterin dehydrogenase (MTD)"/>
    <property type="match status" value="1"/>
</dbReference>
<dbReference type="HAMAP" id="MF_00058">
    <property type="entry name" value="MTD"/>
    <property type="match status" value="1"/>
</dbReference>
<dbReference type="InterPro" id="IPR002844">
    <property type="entry name" value="MTD"/>
</dbReference>
<dbReference type="InterPro" id="IPR036080">
    <property type="entry name" value="MTD_sf"/>
</dbReference>
<dbReference type="NCBIfam" id="NF002162">
    <property type="entry name" value="PRK00994.1"/>
    <property type="match status" value="1"/>
</dbReference>
<dbReference type="Pfam" id="PF01993">
    <property type="entry name" value="MTD"/>
    <property type="match status" value="1"/>
</dbReference>
<dbReference type="SUPFAM" id="SSF102324">
    <property type="entry name" value="F420-dependent methylenetetrahydromethanopterin dehydrogenase (MTD)"/>
    <property type="match status" value="1"/>
</dbReference>
<comment type="function">
    <text evidence="1">Catalyzes the reversible reduction of methenyl-H(4)MPT(+) to methylene-H(4)MPT.</text>
</comment>
<comment type="catalytic activity">
    <reaction evidence="1">
        <text>5,10-methylenetetrahydromethanopterin + oxidized coenzyme F420-(gamma-L-Glu)(n) + 2 H(+) = 5,10-methenyl-5,6,7,8-tetrahydromethanopterin + reduced coenzyme F420-(gamma-L-Glu)(n)</text>
        <dbReference type="Rhea" id="RHEA:16721"/>
        <dbReference type="Rhea" id="RHEA-COMP:12939"/>
        <dbReference type="Rhea" id="RHEA-COMP:14378"/>
        <dbReference type="ChEBI" id="CHEBI:15378"/>
        <dbReference type="ChEBI" id="CHEBI:57818"/>
        <dbReference type="ChEBI" id="CHEBI:58337"/>
        <dbReference type="ChEBI" id="CHEBI:133980"/>
        <dbReference type="ChEBI" id="CHEBI:139511"/>
        <dbReference type="EC" id="1.5.98.1"/>
    </reaction>
</comment>
<comment type="pathway">
    <text evidence="1">One-carbon metabolism; methanogenesis from CO(2); 5,10-methylene-5,6,7,8-tetrahydromethanopterin from 5,10-methenyl-5,6,7,8-tetrahydromethanopterin (coenzyme F420 route): step 1/1.</text>
</comment>
<comment type="similarity">
    <text evidence="1">Belongs to the MTD family.</text>
</comment>
<name>MTD_METLZ</name>
<gene>
    <name evidence="1" type="primary">mtd</name>
    <name type="ordered locus">Mlab_0079</name>
</gene>
<evidence type="ECO:0000255" key="1">
    <source>
        <dbReference type="HAMAP-Rule" id="MF_00058"/>
    </source>
</evidence>
<feature type="chain" id="PRO_1000117811" description="F420-dependent methylenetetrahydromethanopterin dehydrogenase">
    <location>
        <begin position="1"/>
        <end position="280"/>
    </location>
</feature>
<proteinExistence type="inferred from homology"/>
<reference key="1">
    <citation type="journal article" date="2009" name="Stand. Genomic Sci.">
        <title>Complete genome sequence of Methanocorpusculum labreanum type strain Z.</title>
        <authorList>
            <person name="Anderson I.J."/>
            <person name="Sieprawska-Lupa M."/>
            <person name="Goltsman E."/>
            <person name="Lapidus A."/>
            <person name="Copeland A."/>
            <person name="Glavina Del Rio T."/>
            <person name="Tice H."/>
            <person name="Dalin E."/>
            <person name="Barry K."/>
            <person name="Pitluck S."/>
            <person name="Hauser L."/>
            <person name="Land M."/>
            <person name="Lucas S."/>
            <person name="Richardson P."/>
            <person name="Whitman W.B."/>
            <person name="Kyrpides N.C."/>
        </authorList>
    </citation>
    <scope>NUCLEOTIDE SEQUENCE [LARGE SCALE GENOMIC DNA]</scope>
    <source>
        <strain>ATCC 43576 / DSM 4855 / Z</strain>
    </source>
</reference>
<keyword id="KW-0484">Methanogenesis</keyword>
<keyword id="KW-0554">One-carbon metabolism</keyword>
<keyword id="KW-0560">Oxidoreductase</keyword>
<keyword id="KW-1185">Reference proteome</keyword>